<reference key="1">
    <citation type="journal article" date="2000" name="Nature">
        <title>Sequence and analysis of chromosome 1 of the plant Arabidopsis thaliana.</title>
        <authorList>
            <person name="Theologis A."/>
            <person name="Ecker J.R."/>
            <person name="Palm C.J."/>
            <person name="Federspiel N.A."/>
            <person name="Kaul S."/>
            <person name="White O."/>
            <person name="Alonso J."/>
            <person name="Altafi H."/>
            <person name="Araujo R."/>
            <person name="Bowman C.L."/>
            <person name="Brooks S.Y."/>
            <person name="Buehler E."/>
            <person name="Chan A."/>
            <person name="Chao Q."/>
            <person name="Chen H."/>
            <person name="Cheuk R.F."/>
            <person name="Chin C.W."/>
            <person name="Chung M.K."/>
            <person name="Conn L."/>
            <person name="Conway A.B."/>
            <person name="Conway A.R."/>
            <person name="Creasy T.H."/>
            <person name="Dewar K."/>
            <person name="Dunn P."/>
            <person name="Etgu P."/>
            <person name="Feldblyum T.V."/>
            <person name="Feng J.-D."/>
            <person name="Fong B."/>
            <person name="Fujii C.Y."/>
            <person name="Gill J.E."/>
            <person name="Goldsmith A.D."/>
            <person name="Haas B."/>
            <person name="Hansen N.F."/>
            <person name="Hughes B."/>
            <person name="Huizar L."/>
            <person name="Hunter J.L."/>
            <person name="Jenkins J."/>
            <person name="Johnson-Hopson C."/>
            <person name="Khan S."/>
            <person name="Khaykin E."/>
            <person name="Kim C.J."/>
            <person name="Koo H.L."/>
            <person name="Kremenetskaia I."/>
            <person name="Kurtz D.B."/>
            <person name="Kwan A."/>
            <person name="Lam B."/>
            <person name="Langin-Hooper S."/>
            <person name="Lee A."/>
            <person name="Lee J.M."/>
            <person name="Lenz C.A."/>
            <person name="Li J.H."/>
            <person name="Li Y.-P."/>
            <person name="Lin X."/>
            <person name="Liu S.X."/>
            <person name="Liu Z.A."/>
            <person name="Luros J.S."/>
            <person name="Maiti R."/>
            <person name="Marziali A."/>
            <person name="Militscher J."/>
            <person name="Miranda M."/>
            <person name="Nguyen M."/>
            <person name="Nierman W.C."/>
            <person name="Osborne B.I."/>
            <person name="Pai G."/>
            <person name="Peterson J."/>
            <person name="Pham P.K."/>
            <person name="Rizzo M."/>
            <person name="Rooney T."/>
            <person name="Rowley D."/>
            <person name="Sakano H."/>
            <person name="Salzberg S.L."/>
            <person name="Schwartz J.R."/>
            <person name="Shinn P."/>
            <person name="Southwick A.M."/>
            <person name="Sun H."/>
            <person name="Tallon L.J."/>
            <person name="Tambunga G."/>
            <person name="Toriumi M.J."/>
            <person name="Town C.D."/>
            <person name="Utterback T."/>
            <person name="Van Aken S."/>
            <person name="Vaysberg M."/>
            <person name="Vysotskaia V.S."/>
            <person name="Walker M."/>
            <person name="Wu D."/>
            <person name="Yu G."/>
            <person name="Fraser C.M."/>
            <person name="Venter J.C."/>
            <person name="Davis R.W."/>
        </authorList>
    </citation>
    <scope>NUCLEOTIDE SEQUENCE [LARGE SCALE GENOMIC DNA]</scope>
    <source>
        <strain>cv. Columbia</strain>
    </source>
</reference>
<reference key="2">
    <citation type="journal article" date="2017" name="Plant J.">
        <title>Araport11: a complete reannotation of the Arabidopsis thaliana reference genome.</title>
        <authorList>
            <person name="Cheng C.Y."/>
            <person name="Krishnakumar V."/>
            <person name="Chan A.P."/>
            <person name="Thibaud-Nissen F."/>
            <person name="Schobel S."/>
            <person name="Town C.D."/>
        </authorList>
    </citation>
    <scope>GENOME REANNOTATION</scope>
    <source>
        <strain>cv. Columbia</strain>
    </source>
</reference>
<reference key="3">
    <citation type="journal article" date="2002" name="Science">
        <title>Functional annotation of a full-length Arabidopsis cDNA collection.</title>
        <authorList>
            <person name="Seki M."/>
            <person name="Narusaka M."/>
            <person name="Kamiya A."/>
            <person name="Ishida J."/>
            <person name="Satou M."/>
            <person name="Sakurai T."/>
            <person name="Nakajima M."/>
            <person name="Enju A."/>
            <person name="Akiyama K."/>
            <person name="Oono Y."/>
            <person name="Muramatsu M."/>
            <person name="Hayashizaki Y."/>
            <person name="Kawai J."/>
            <person name="Carninci P."/>
            <person name="Itoh M."/>
            <person name="Ishii Y."/>
            <person name="Arakawa T."/>
            <person name="Shibata K."/>
            <person name="Shinagawa A."/>
            <person name="Shinozaki K."/>
        </authorList>
    </citation>
    <scope>NUCLEOTIDE SEQUENCE [LARGE SCALE MRNA]</scope>
    <source>
        <strain>cv. Columbia</strain>
    </source>
</reference>
<reference key="4">
    <citation type="journal article" date="2003" name="Science">
        <title>Empirical analysis of transcriptional activity in the Arabidopsis genome.</title>
        <authorList>
            <person name="Yamada K."/>
            <person name="Lim J."/>
            <person name="Dale J.M."/>
            <person name="Chen H."/>
            <person name="Shinn P."/>
            <person name="Palm C.J."/>
            <person name="Southwick A.M."/>
            <person name="Wu H.C."/>
            <person name="Kim C.J."/>
            <person name="Nguyen M."/>
            <person name="Pham P.K."/>
            <person name="Cheuk R.F."/>
            <person name="Karlin-Newmann G."/>
            <person name="Liu S.X."/>
            <person name="Lam B."/>
            <person name="Sakano H."/>
            <person name="Wu T."/>
            <person name="Yu G."/>
            <person name="Miranda M."/>
            <person name="Quach H.L."/>
            <person name="Tripp M."/>
            <person name="Chang C.H."/>
            <person name="Lee J.M."/>
            <person name="Toriumi M.J."/>
            <person name="Chan M.M."/>
            <person name="Tang C.C."/>
            <person name="Onodera C.S."/>
            <person name="Deng J.M."/>
            <person name="Akiyama K."/>
            <person name="Ansari Y."/>
            <person name="Arakawa T."/>
            <person name="Banh J."/>
            <person name="Banno F."/>
            <person name="Bowser L."/>
            <person name="Brooks S.Y."/>
            <person name="Carninci P."/>
            <person name="Chao Q."/>
            <person name="Choy N."/>
            <person name="Enju A."/>
            <person name="Goldsmith A.D."/>
            <person name="Gurjal M."/>
            <person name="Hansen N.F."/>
            <person name="Hayashizaki Y."/>
            <person name="Johnson-Hopson C."/>
            <person name="Hsuan V.W."/>
            <person name="Iida K."/>
            <person name="Karnes M."/>
            <person name="Khan S."/>
            <person name="Koesema E."/>
            <person name="Ishida J."/>
            <person name="Jiang P.X."/>
            <person name="Jones T."/>
            <person name="Kawai J."/>
            <person name="Kamiya A."/>
            <person name="Meyers C."/>
            <person name="Nakajima M."/>
            <person name="Narusaka M."/>
            <person name="Seki M."/>
            <person name="Sakurai T."/>
            <person name="Satou M."/>
            <person name="Tamse R."/>
            <person name="Vaysberg M."/>
            <person name="Wallender E.K."/>
            <person name="Wong C."/>
            <person name="Yamamura Y."/>
            <person name="Yuan S."/>
            <person name="Shinozaki K."/>
            <person name="Davis R.W."/>
            <person name="Theologis A."/>
            <person name="Ecker J.R."/>
        </authorList>
    </citation>
    <scope>NUCLEOTIDE SEQUENCE [LARGE SCALE MRNA]</scope>
    <source>
        <strain>cv. Columbia</strain>
    </source>
</reference>
<reference key="5">
    <citation type="journal article" date="2008" name="Trends Plant Sci.">
        <title>The plant B3 superfamily.</title>
        <authorList>
            <person name="Swaminathan K."/>
            <person name="Peterson K."/>
            <person name="Jack T."/>
        </authorList>
    </citation>
    <scope>GENE FAMILY</scope>
</reference>
<proteinExistence type="inferred from homology"/>
<evidence type="ECO:0000255" key="1">
    <source>
        <dbReference type="PROSITE-ProRule" id="PRU00326"/>
    </source>
</evidence>
<evidence type="ECO:0000305" key="2"/>
<comment type="subcellular location">
    <subcellularLocation>
        <location evidence="1">Nucleus</location>
    </subcellularLocation>
</comment>
<feature type="chain" id="PRO_0000375127" description="B3 domain-containing protein At1g08985">
    <location>
        <begin position="1"/>
        <end position="101"/>
    </location>
</feature>
<feature type="DNA-binding region" description="TF-B3" evidence="1">
    <location>
        <begin position="7"/>
        <end position="101"/>
    </location>
</feature>
<feature type="sequence conflict" description="In Ref. 3; BAC43235 and 4; AAO42929." evidence="2" ref="3 4">
    <original>I</original>
    <variation>V</variation>
    <location>
        <position position="98"/>
    </location>
</feature>
<dbReference type="EMBL" id="AC000106">
    <property type="status" value="NOT_ANNOTATED_CDS"/>
    <property type="molecule type" value="Genomic_DNA"/>
</dbReference>
<dbReference type="EMBL" id="CP002684">
    <property type="protein sequence ID" value="AEE28379.1"/>
    <property type="molecule type" value="Genomic_DNA"/>
</dbReference>
<dbReference type="EMBL" id="AK118638">
    <property type="protein sequence ID" value="BAC43235.1"/>
    <property type="molecule type" value="mRNA"/>
</dbReference>
<dbReference type="EMBL" id="BT004683">
    <property type="protein sequence ID" value="AAO42929.1"/>
    <property type="molecule type" value="mRNA"/>
</dbReference>
<dbReference type="RefSeq" id="NP_849620.1">
    <property type="nucleotide sequence ID" value="NM_179289.2"/>
</dbReference>
<dbReference type="SMR" id="Q8GWU1"/>
<dbReference type="iPTMnet" id="Q8GWU1"/>
<dbReference type="PaxDb" id="3702-AT1G08985.1"/>
<dbReference type="EnsemblPlants" id="AT1G08985.1">
    <property type="protein sequence ID" value="AT1G08985.1"/>
    <property type="gene ID" value="AT1G08985"/>
</dbReference>
<dbReference type="GeneID" id="837419"/>
<dbReference type="Gramene" id="AT1G08985.1">
    <property type="protein sequence ID" value="AT1G08985.1"/>
    <property type="gene ID" value="AT1G08985"/>
</dbReference>
<dbReference type="KEGG" id="ath:AT1G08985"/>
<dbReference type="Araport" id="AT1G08985"/>
<dbReference type="TAIR" id="AT1G08985"/>
<dbReference type="HOGENOM" id="CLU_162241_0_0_1"/>
<dbReference type="InParanoid" id="Q8GWU1"/>
<dbReference type="OMA" id="DNDKSYW"/>
<dbReference type="OrthoDB" id="1035564at2759"/>
<dbReference type="PhylomeDB" id="Q8GWU1"/>
<dbReference type="PRO" id="PR:Q8GWU1"/>
<dbReference type="Proteomes" id="UP000006548">
    <property type="component" value="Chromosome 1"/>
</dbReference>
<dbReference type="ExpressionAtlas" id="Q8GWU1">
    <property type="expression patterns" value="baseline and differential"/>
</dbReference>
<dbReference type="GO" id="GO:0005634">
    <property type="term" value="C:nucleus"/>
    <property type="evidence" value="ECO:0007669"/>
    <property type="project" value="UniProtKB-SubCell"/>
</dbReference>
<dbReference type="GO" id="GO:0003677">
    <property type="term" value="F:DNA binding"/>
    <property type="evidence" value="ECO:0007669"/>
    <property type="project" value="UniProtKB-KW"/>
</dbReference>
<dbReference type="CDD" id="cd10017">
    <property type="entry name" value="B3_DNA"/>
    <property type="match status" value="1"/>
</dbReference>
<dbReference type="Gene3D" id="2.40.330.10">
    <property type="entry name" value="DNA-binding pseudobarrel domain"/>
    <property type="match status" value="1"/>
</dbReference>
<dbReference type="InterPro" id="IPR003340">
    <property type="entry name" value="B3_DNA-bd"/>
</dbReference>
<dbReference type="InterPro" id="IPR051442">
    <property type="entry name" value="B3_domain"/>
</dbReference>
<dbReference type="InterPro" id="IPR015300">
    <property type="entry name" value="DNA-bd_pseudobarrel_sf"/>
</dbReference>
<dbReference type="PANTHER" id="PTHR34269:SF15">
    <property type="entry name" value="TF-B3 DOMAIN-CONTAINING PROTEIN"/>
    <property type="match status" value="1"/>
</dbReference>
<dbReference type="PANTHER" id="PTHR34269">
    <property type="entry name" value="TRANSCRIPTION FACTOR B3-DOMAIN FAMILY-RELATED"/>
    <property type="match status" value="1"/>
</dbReference>
<dbReference type="Pfam" id="PF02362">
    <property type="entry name" value="B3"/>
    <property type="match status" value="1"/>
</dbReference>
<dbReference type="SMART" id="SM01019">
    <property type="entry name" value="B3"/>
    <property type="match status" value="1"/>
</dbReference>
<dbReference type="SUPFAM" id="SSF101936">
    <property type="entry name" value="DNA-binding pseudobarrel domain"/>
    <property type="match status" value="1"/>
</dbReference>
<dbReference type="PROSITE" id="PS50863">
    <property type="entry name" value="B3"/>
    <property type="match status" value="1"/>
</dbReference>
<protein>
    <recommendedName>
        <fullName>B3 domain-containing protein At1g08985</fullName>
    </recommendedName>
</protein>
<accession>Q8GWU1</accession>
<name>Y1898_ARATH</name>
<sequence length="101" mass="11732">MDPNMMIVKTLSETDCSHDNKLILPRDKVENIVRSTGVPVPRMGIQVEILDNTNSYWVNLRQSQRGYFIGRGWGELRDARNLKAGDVIKLYWQNTKFIFSM</sequence>
<keyword id="KW-0238">DNA-binding</keyword>
<keyword id="KW-0539">Nucleus</keyword>
<keyword id="KW-1185">Reference proteome</keyword>
<keyword id="KW-0804">Transcription</keyword>
<keyword id="KW-0805">Transcription regulation</keyword>
<organism>
    <name type="scientific">Arabidopsis thaliana</name>
    <name type="common">Mouse-ear cress</name>
    <dbReference type="NCBI Taxonomy" id="3702"/>
    <lineage>
        <taxon>Eukaryota</taxon>
        <taxon>Viridiplantae</taxon>
        <taxon>Streptophyta</taxon>
        <taxon>Embryophyta</taxon>
        <taxon>Tracheophyta</taxon>
        <taxon>Spermatophyta</taxon>
        <taxon>Magnoliopsida</taxon>
        <taxon>eudicotyledons</taxon>
        <taxon>Gunneridae</taxon>
        <taxon>Pentapetalae</taxon>
        <taxon>rosids</taxon>
        <taxon>malvids</taxon>
        <taxon>Brassicales</taxon>
        <taxon>Brassicaceae</taxon>
        <taxon>Camelineae</taxon>
        <taxon>Arabidopsis</taxon>
    </lineage>
</organism>
<gene>
    <name type="ordered locus">At1g08985</name>
    <name type="ORF">F7G19.27</name>
</gene>